<evidence type="ECO:0000255" key="1">
    <source>
        <dbReference type="HAMAP-Rule" id="MF_01333"/>
    </source>
</evidence>
<evidence type="ECO:0000305" key="2"/>
<proteinExistence type="inferred from homology"/>
<dbReference type="EMBL" id="CP000488">
    <property type="protein sequence ID" value="ABL01969.1"/>
    <property type="molecule type" value="Genomic_DNA"/>
</dbReference>
<dbReference type="RefSeq" id="WP_011737595.1">
    <property type="nucleotide sequence ID" value="NC_008610.1"/>
</dbReference>
<dbReference type="SMR" id="A1AVL2"/>
<dbReference type="STRING" id="413404.Rmag_0177"/>
<dbReference type="KEGG" id="rma:Rmag_0177"/>
<dbReference type="eggNOG" id="COG0094">
    <property type="taxonomic scope" value="Bacteria"/>
</dbReference>
<dbReference type="HOGENOM" id="CLU_061015_2_1_6"/>
<dbReference type="OrthoDB" id="9806626at2"/>
<dbReference type="Proteomes" id="UP000002587">
    <property type="component" value="Chromosome"/>
</dbReference>
<dbReference type="GO" id="GO:1990904">
    <property type="term" value="C:ribonucleoprotein complex"/>
    <property type="evidence" value="ECO:0007669"/>
    <property type="project" value="UniProtKB-KW"/>
</dbReference>
<dbReference type="GO" id="GO:0005840">
    <property type="term" value="C:ribosome"/>
    <property type="evidence" value="ECO:0007669"/>
    <property type="project" value="UniProtKB-KW"/>
</dbReference>
<dbReference type="GO" id="GO:0019843">
    <property type="term" value="F:rRNA binding"/>
    <property type="evidence" value="ECO:0007669"/>
    <property type="project" value="UniProtKB-UniRule"/>
</dbReference>
<dbReference type="GO" id="GO:0003735">
    <property type="term" value="F:structural constituent of ribosome"/>
    <property type="evidence" value="ECO:0007669"/>
    <property type="project" value="InterPro"/>
</dbReference>
<dbReference type="GO" id="GO:0000049">
    <property type="term" value="F:tRNA binding"/>
    <property type="evidence" value="ECO:0007669"/>
    <property type="project" value="UniProtKB-UniRule"/>
</dbReference>
<dbReference type="GO" id="GO:0006412">
    <property type="term" value="P:translation"/>
    <property type="evidence" value="ECO:0007669"/>
    <property type="project" value="UniProtKB-UniRule"/>
</dbReference>
<dbReference type="FunFam" id="3.30.1440.10:FF:000001">
    <property type="entry name" value="50S ribosomal protein L5"/>
    <property type="match status" value="1"/>
</dbReference>
<dbReference type="Gene3D" id="3.30.1440.10">
    <property type="match status" value="1"/>
</dbReference>
<dbReference type="HAMAP" id="MF_01333_B">
    <property type="entry name" value="Ribosomal_uL5_B"/>
    <property type="match status" value="1"/>
</dbReference>
<dbReference type="InterPro" id="IPR002132">
    <property type="entry name" value="Ribosomal_uL5"/>
</dbReference>
<dbReference type="InterPro" id="IPR020930">
    <property type="entry name" value="Ribosomal_uL5_bac-type"/>
</dbReference>
<dbReference type="InterPro" id="IPR031309">
    <property type="entry name" value="Ribosomal_uL5_C"/>
</dbReference>
<dbReference type="InterPro" id="IPR020929">
    <property type="entry name" value="Ribosomal_uL5_CS"/>
</dbReference>
<dbReference type="InterPro" id="IPR022803">
    <property type="entry name" value="Ribosomal_uL5_dom_sf"/>
</dbReference>
<dbReference type="InterPro" id="IPR031310">
    <property type="entry name" value="Ribosomal_uL5_N"/>
</dbReference>
<dbReference type="NCBIfam" id="NF000585">
    <property type="entry name" value="PRK00010.1"/>
    <property type="match status" value="1"/>
</dbReference>
<dbReference type="PANTHER" id="PTHR11994">
    <property type="entry name" value="60S RIBOSOMAL PROTEIN L11-RELATED"/>
    <property type="match status" value="1"/>
</dbReference>
<dbReference type="Pfam" id="PF00281">
    <property type="entry name" value="Ribosomal_L5"/>
    <property type="match status" value="1"/>
</dbReference>
<dbReference type="Pfam" id="PF00673">
    <property type="entry name" value="Ribosomal_L5_C"/>
    <property type="match status" value="1"/>
</dbReference>
<dbReference type="PIRSF" id="PIRSF002161">
    <property type="entry name" value="Ribosomal_L5"/>
    <property type="match status" value="1"/>
</dbReference>
<dbReference type="SUPFAM" id="SSF55282">
    <property type="entry name" value="RL5-like"/>
    <property type="match status" value="1"/>
</dbReference>
<dbReference type="PROSITE" id="PS00358">
    <property type="entry name" value="RIBOSOMAL_L5"/>
    <property type="match status" value="1"/>
</dbReference>
<gene>
    <name evidence="1" type="primary">rplE</name>
    <name type="ordered locus">Rmag_0177</name>
</gene>
<comment type="function">
    <text evidence="1">This is one of the proteins that bind and probably mediate the attachment of the 5S RNA into the large ribosomal subunit, where it forms part of the central protuberance. In the 70S ribosome it contacts protein S13 of the 30S subunit (bridge B1b), connecting the 2 subunits; this bridge is implicated in subunit movement. Contacts the P site tRNA; the 5S rRNA and some of its associated proteins might help stabilize positioning of ribosome-bound tRNAs.</text>
</comment>
<comment type="subunit">
    <text evidence="1">Part of the 50S ribosomal subunit; part of the 5S rRNA/L5/L18/L25 subcomplex. Contacts the 5S rRNA and the P site tRNA. Forms a bridge to the 30S subunit in the 70S ribosome.</text>
</comment>
<comment type="similarity">
    <text evidence="1">Belongs to the universal ribosomal protein uL5 family.</text>
</comment>
<organism>
    <name type="scientific">Ruthia magnifica subsp. Calyptogena magnifica</name>
    <dbReference type="NCBI Taxonomy" id="413404"/>
    <lineage>
        <taxon>Bacteria</taxon>
        <taxon>Pseudomonadati</taxon>
        <taxon>Pseudomonadota</taxon>
        <taxon>Gammaproteobacteria</taxon>
        <taxon>Candidatus Pseudothioglobaceae</taxon>
        <taxon>Candidatus Ruthturnera</taxon>
    </lineage>
</organism>
<sequence length="179" mass="20282">MSRLQEQYKNEILPALQKELDMSNPMQVPKIEKITINMGLGSALGDKKVLQSALKEMSLISGQKPLICNARKSVASFKLREGNPIGCKVTLRKERMYEFLDRLINIAIPRIRDFRGFKATAFDGRGNYNMGITEQITFAEIDFEKVTRILGMDIAITTTAKSDEEAKKLLVMFKFPFKG</sequence>
<protein>
    <recommendedName>
        <fullName evidence="1">Large ribosomal subunit protein uL5</fullName>
    </recommendedName>
    <alternativeName>
        <fullName evidence="2">50S ribosomal protein L5</fullName>
    </alternativeName>
</protein>
<reference key="1">
    <citation type="journal article" date="2007" name="Science">
        <title>The Calyptogena magnifica chemoautotrophic symbiont genome.</title>
        <authorList>
            <person name="Newton I.L.G."/>
            <person name="Woyke T."/>
            <person name="Auchtung T.A."/>
            <person name="Dilly G.F."/>
            <person name="Dutton R.J."/>
            <person name="Fisher M.C."/>
            <person name="Fontanez K.M."/>
            <person name="Lau E."/>
            <person name="Stewart F.J."/>
            <person name="Richardson P.M."/>
            <person name="Barry K.W."/>
            <person name="Saunders E."/>
            <person name="Detter J.C."/>
            <person name="Wu D."/>
            <person name="Eisen J.A."/>
            <person name="Cavanaugh C.M."/>
        </authorList>
    </citation>
    <scope>NUCLEOTIDE SEQUENCE [LARGE SCALE GENOMIC DNA]</scope>
</reference>
<feature type="chain" id="PRO_1000052817" description="Large ribosomal subunit protein uL5">
    <location>
        <begin position="1"/>
        <end position="179"/>
    </location>
</feature>
<accession>A1AVL2</accession>
<name>RL5_RUTMC</name>
<keyword id="KW-0687">Ribonucleoprotein</keyword>
<keyword id="KW-0689">Ribosomal protein</keyword>
<keyword id="KW-0694">RNA-binding</keyword>
<keyword id="KW-0699">rRNA-binding</keyword>
<keyword id="KW-0820">tRNA-binding</keyword>